<dbReference type="EC" id="3.1.3.48"/>
<dbReference type="EMBL" id="AY704141">
    <property type="protein sequence ID" value="AAW28780.1"/>
    <property type="molecule type" value="mRNA"/>
</dbReference>
<dbReference type="EMBL" id="AY704142">
    <property type="protein sequence ID" value="AAW28781.1"/>
    <property type="molecule type" value="mRNA"/>
</dbReference>
<dbReference type="EMBL" id="AY704143">
    <property type="protein sequence ID" value="AAW28782.1"/>
    <property type="molecule type" value="mRNA"/>
</dbReference>
<dbReference type="EMBL" id="AY704144">
    <property type="protein sequence ID" value="AAW28783.1"/>
    <property type="molecule type" value="mRNA"/>
</dbReference>
<dbReference type="EMBL" id="AY704145">
    <property type="protein sequence ID" value="AAW28784.1"/>
    <property type="molecule type" value="mRNA"/>
</dbReference>
<dbReference type="EMBL" id="AY704146">
    <property type="protein sequence ID" value="AAW28785.1"/>
    <property type="molecule type" value="mRNA"/>
</dbReference>
<dbReference type="EMBL" id="AY704147">
    <property type="protein sequence ID" value="AAW28786.1"/>
    <property type="molecule type" value="mRNA"/>
</dbReference>
<dbReference type="EMBL" id="AY704148">
    <property type="protein sequence ID" value="AAW28787.1"/>
    <property type="molecule type" value="mRNA"/>
</dbReference>
<dbReference type="EMBL" id="AY704149">
    <property type="protein sequence ID" value="AAW28788.1"/>
    <property type="molecule type" value="mRNA"/>
</dbReference>
<dbReference type="EMBL" id="AY704150">
    <property type="protein sequence ID" value="AAW28789.1"/>
    <property type="molecule type" value="mRNA"/>
</dbReference>
<dbReference type="EMBL" id="AY704151">
    <property type="protein sequence ID" value="AAW28790.1"/>
    <property type="molecule type" value="mRNA"/>
</dbReference>
<dbReference type="EMBL" id="AY704152">
    <property type="protein sequence ID" value="AAW28791.1"/>
    <property type="molecule type" value="mRNA"/>
</dbReference>
<dbReference type="EMBL" id="AY704153">
    <property type="protein sequence ID" value="AAW28792.1"/>
    <property type="molecule type" value="mRNA"/>
</dbReference>
<dbReference type="EMBL" id="AY704154">
    <property type="protein sequence ID" value="AAW28793.1"/>
    <property type="molecule type" value="mRNA"/>
</dbReference>
<dbReference type="EMBL" id="AY704158">
    <property type="protein sequence ID" value="AAW28797.1"/>
    <property type="status" value="ALT_SEQ"/>
    <property type="molecule type" value="mRNA"/>
</dbReference>
<dbReference type="EMBL" id="AY753191">
    <property type="protein sequence ID" value="AAW88572.1"/>
    <property type="molecule type" value="mRNA"/>
</dbReference>
<dbReference type="EMBL" id="AL450334">
    <property type="protein sequence ID" value="CAI15685.1"/>
    <property type="molecule type" value="Genomic_DNA"/>
</dbReference>
<dbReference type="EMBL" id="AL672108">
    <property type="protein sequence ID" value="CAI15685.1"/>
    <property type="status" value="JOINED"/>
    <property type="molecule type" value="Genomic_DNA"/>
</dbReference>
<dbReference type="EMBL" id="AL358791">
    <property type="protein sequence ID" value="CAI14088.1"/>
    <property type="molecule type" value="Genomic_DNA"/>
</dbReference>
<dbReference type="EMBL" id="BX005072">
    <property type="protein sequence ID" value="CAI14088.1"/>
    <property type="status" value="JOINED"/>
    <property type="molecule type" value="Genomic_DNA"/>
</dbReference>
<dbReference type="EMBL" id="AL358791">
    <property type="protein sequence ID" value="CAI14090.1"/>
    <property type="molecule type" value="Genomic_DNA"/>
</dbReference>
<dbReference type="EMBL" id="BX005072">
    <property type="protein sequence ID" value="CAI14090.1"/>
    <property type="status" value="JOINED"/>
    <property type="molecule type" value="Genomic_DNA"/>
</dbReference>
<dbReference type="EMBL" id="AL672108">
    <property type="protein sequence ID" value="CAI12200.1"/>
    <property type="molecule type" value="Genomic_DNA"/>
</dbReference>
<dbReference type="EMBL" id="AL450334">
    <property type="protein sequence ID" value="CAI12200.1"/>
    <property type="status" value="JOINED"/>
    <property type="molecule type" value="Genomic_DNA"/>
</dbReference>
<dbReference type="EMBL" id="BX005072">
    <property type="protein sequence ID" value="CAI23640.1"/>
    <property type="molecule type" value="Genomic_DNA"/>
</dbReference>
<dbReference type="EMBL" id="AL358791">
    <property type="protein sequence ID" value="CAI23640.1"/>
    <property type="status" value="JOINED"/>
    <property type="molecule type" value="Genomic_DNA"/>
</dbReference>
<dbReference type="EMBL" id="BX005072">
    <property type="protein sequence ID" value="CAI23642.1"/>
    <property type="molecule type" value="Genomic_DNA"/>
</dbReference>
<dbReference type="EMBL" id="AL358791">
    <property type="protein sequence ID" value="CAI23642.1"/>
    <property type="status" value="JOINED"/>
    <property type="molecule type" value="Genomic_DNA"/>
</dbReference>
<dbReference type="EMBL" id="BC093750">
    <property type="protein sequence ID" value="AAH93750.1"/>
    <property type="molecule type" value="mRNA"/>
</dbReference>
<dbReference type="EMBL" id="BC113473">
    <property type="protein sequence ID" value="AAI13474.1"/>
    <property type="molecule type" value="mRNA"/>
</dbReference>
<dbReference type="EMBL" id="BC143394">
    <property type="protein sequence ID" value="AAI43395.1"/>
    <property type="molecule type" value="mRNA"/>
</dbReference>
<dbReference type="EMBL" id="BC171725">
    <property type="protein sequence ID" value="AAI71725.1"/>
    <property type="molecule type" value="mRNA"/>
</dbReference>
<dbReference type="CCDS" id="CCDS73105.1">
    <molecule id="Q4JDL3-2"/>
</dbReference>
<dbReference type="CCDS" id="CCDS73106.1">
    <molecule id="Q4JDL3-8"/>
</dbReference>
<dbReference type="CCDS" id="CCDS73107.1">
    <molecule id="Q4JDL3-11"/>
</dbReference>
<dbReference type="CCDS" id="CCDS73108.1">
    <molecule id="Q4JDL3-15"/>
</dbReference>
<dbReference type="CCDS" id="CCDS73109.1">
    <molecule id="Q4JDL3-6"/>
</dbReference>
<dbReference type="CCDS" id="CCDS73110.1">
    <molecule id="Q4JDL3-1"/>
</dbReference>
<dbReference type="CCDS" id="CCDS73111.1">
    <molecule id="Q4JDL3-7"/>
</dbReference>
<dbReference type="CCDS" id="CCDS73114.1">
    <molecule id="Q4JDL3-4"/>
</dbReference>
<dbReference type="CCDS" id="CCDS73115.1">
    <molecule id="Q4JDL3-14"/>
</dbReference>
<dbReference type="CCDS" id="CCDS81454.1">
    <molecule id="Q4JDL3-10"/>
</dbReference>
<dbReference type="CCDS" id="CCDS81456.1">
    <molecule id="Q4JDL3-5"/>
</dbReference>
<dbReference type="CCDS" id="CCDS86087.1">
    <molecule id="Q4JDL3-13"/>
</dbReference>
<dbReference type="RefSeq" id="NP_001035816.1">
    <molecule id="Q4JDL3-1"/>
    <property type="nucleotide sequence ID" value="NM_001042357.5"/>
</dbReference>
<dbReference type="RefSeq" id="NP_001035817.1">
    <molecule id="Q4JDL3-2"/>
    <property type="nucleotide sequence ID" value="NM_001042358.5"/>
</dbReference>
<dbReference type="RefSeq" id="NP_001035818.1">
    <molecule id="Q4JDL3-11"/>
    <property type="nucleotide sequence ID" value="NM_001042359.4"/>
</dbReference>
<dbReference type="RefSeq" id="NP_001035819.1">
    <molecule id="Q4JDL3-6"/>
    <property type="nucleotide sequence ID" value="NM_001042360.4"/>
</dbReference>
<dbReference type="RefSeq" id="NP_001035820.1">
    <molecule id="Q4JDL3-8"/>
    <property type="nucleotide sequence ID" value="NM_001042361.5"/>
</dbReference>
<dbReference type="RefSeq" id="NP_001035821.1">
    <molecule id="Q4JDL3-15"/>
    <property type="nucleotide sequence ID" value="NM_001042362.4"/>
</dbReference>
<dbReference type="RefSeq" id="NP_001035822.1">
    <molecule id="Q4JDL3-4"/>
    <property type="nucleotide sequence ID" value="NM_001042363.5"/>
</dbReference>
<dbReference type="RefSeq" id="NP_001035823.1">
    <molecule id="Q4JDL3-14"/>
    <property type="nucleotide sequence ID" value="NM_001042364.5"/>
</dbReference>
<dbReference type="RefSeq" id="NP_001307610.1">
    <molecule id="Q4JDL3-4"/>
    <property type="nucleotide sequence ID" value="NM_001320681.2"/>
</dbReference>
<dbReference type="RefSeq" id="NP_001307611.1">
    <property type="nucleotide sequence ID" value="NM_001320682.1"/>
</dbReference>
<dbReference type="RefSeq" id="NP_001307612.1">
    <molecule id="Q4JDL3-7"/>
    <property type="nucleotide sequence ID" value="NM_001320683.2"/>
</dbReference>
<dbReference type="RefSeq" id="NP_001307613.1">
    <molecule id="Q4JDL3-10"/>
    <property type="nucleotide sequence ID" value="NM_001320684.2"/>
</dbReference>
<dbReference type="RefSeq" id="NP_001307614.1">
    <molecule id="Q4JDL3-3"/>
    <property type="nucleotide sequence ID" value="NM_001320685.2"/>
</dbReference>
<dbReference type="RefSeq" id="NP_001307615.1">
    <molecule id="Q4JDL3-4"/>
    <property type="nucleotide sequence ID" value="NM_001320686.2"/>
</dbReference>
<dbReference type="RefSeq" id="NP_001307617.1">
    <molecule id="Q4JDL3-5"/>
    <property type="nucleotide sequence ID" value="NM_001320688.2"/>
</dbReference>
<dbReference type="RefSeq" id="NP_001307618.1">
    <property type="nucleotide sequence ID" value="NM_001320689.1"/>
</dbReference>
<dbReference type="RefSeq" id="NP_001307619.1">
    <property type="nucleotide sequence ID" value="NM_001320690.1"/>
</dbReference>
<dbReference type="RefSeq" id="NP_001307620.1">
    <property type="nucleotide sequence ID" value="NM_001320691.1"/>
</dbReference>
<dbReference type="RefSeq" id="NP_001339450.1">
    <molecule id="Q4JDL3-3"/>
    <property type="nucleotide sequence ID" value="NM_001352521.2"/>
</dbReference>
<dbReference type="RefSeq" id="NP_001339452.1">
    <molecule id="Q4JDL3-12"/>
    <property type="nucleotide sequence ID" value="NM_001352523.2"/>
</dbReference>
<dbReference type="RefSeq" id="NP_001339460.1">
    <molecule id="Q4JDL3-13"/>
    <property type="nucleotide sequence ID" value="NM_001352531.2"/>
</dbReference>
<dbReference type="RefSeq" id="NP_001339461.1">
    <molecule id="Q4JDL3-14"/>
    <property type="nucleotide sequence ID" value="NM_001352532.2"/>
</dbReference>
<dbReference type="RefSeq" id="NP_001339462.1">
    <molecule id="Q4JDL3-14"/>
    <property type="nucleotide sequence ID" value="NM_001352533.2"/>
</dbReference>
<dbReference type="RefSeq" id="NP_056420.3">
    <molecule id="Q4JDL3-7"/>
    <property type="nucleotide sequence ID" value="NM_015605.8"/>
</dbReference>
<dbReference type="RefSeq" id="XP_011537907.1">
    <molecule id="Q4JDL3-1"/>
    <property type="nucleotide sequence ID" value="XM_011539605.3"/>
</dbReference>
<dbReference type="RefSeq" id="XP_011537908.1">
    <molecule id="Q4JDL3-1"/>
    <property type="nucleotide sequence ID" value="XM_011539606.4"/>
</dbReference>
<dbReference type="RefSeq" id="XP_011537909.1">
    <molecule id="Q4JDL3-1"/>
    <property type="nucleotide sequence ID" value="XM_011539607.3"/>
</dbReference>
<dbReference type="RefSeq" id="XP_011537912.1">
    <molecule id="Q4JDL3-4"/>
    <property type="nucleotide sequence ID" value="XM_011539610.3"/>
</dbReference>
<dbReference type="RefSeq" id="XP_016871533.1">
    <property type="nucleotide sequence ID" value="XM_017016044.1"/>
</dbReference>
<dbReference type="RefSeq" id="XP_016871542.1">
    <property type="nucleotide sequence ID" value="XM_017016053.1"/>
</dbReference>
<dbReference type="RefSeq" id="XP_016871543.1">
    <property type="nucleotide sequence ID" value="XM_017016054.1"/>
</dbReference>
<dbReference type="RefSeq" id="XP_016871546.1">
    <property type="nucleotide sequence ID" value="XM_017016057.1"/>
</dbReference>
<dbReference type="RefSeq" id="XP_016871547.1">
    <property type="nucleotide sequence ID" value="XM_017016058.1"/>
</dbReference>
<dbReference type="RefSeq" id="XP_016871548.1">
    <property type="nucleotide sequence ID" value="XM_017016059.1"/>
</dbReference>
<dbReference type="RefSeq" id="XP_016871549.1">
    <property type="nucleotide sequence ID" value="XM_017016060.1"/>
</dbReference>
<dbReference type="RefSeq" id="XP_047280961.1">
    <molecule id="Q4JDL3-3"/>
    <property type="nucleotide sequence ID" value="XM_047425005.1"/>
</dbReference>
<dbReference type="RefSeq" id="XP_047280963.1">
    <molecule id="Q4JDL3-4"/>
    <property type="nucleotide sequence ID" value="XM_047425007.1"/>
</dbReference>
<dbReference type="RefSeq" id="XP_047280971.1">
    <molecule id="Q4JDL3-10"/>
    <property type="nucleotide sequence ID" value="XM_047425015.1"/>
</dbReference>
<dbReference type="RefSeq" id="XP_047280981.1">
    <molecule id="Q4JDL3-13"/>
    <property type="nucleotide sequence ID" value="XM_047425025.1"/>
</dbReference>
<dbReference type="RefSeq" id="XP_054221461.1">
    <molecule id="Q4JDL3-1"/>
    <property type="nucleotide sequence ID" value="XM_054365486.1"/>
</dbReference>
<dbReference type="RefSeq" id="XP_054221469.1">
    <molecule id="Q4JDL3-4"/>
    <property type="nucleotide sequence ID" value="XM_054365494.1"/>
</dbReference>
<dbReference type="RefSeq" id="XP_054221476.1">
    <molecule id="Q4JDL3-10"/>
    <property type="nucleotide sequence ID" value="XM_054365501.1"/>
</dbReference>
<dbReference type="SMR" id="Q4JDL3"/>
<dbReference type="BioGRID" id="117546">
    <property type="interactions" value="30"/>
</dbReference>
<dbReference type="FunCoup" id="Q4JDL3">
    <property type="interactions" value="193"/>
</dbReference>
<dbReference type="IntAct" id="Q4JDL3">
    <property type="interactions" value="2"/>
</dbReference>
<dbReference type="MINT" id="Q4JDL3"/>
<dbReference type="STRING" id="9606.ENSP00000363459"/>
<dbReference type="DEPOD" id="PTPN20"/>
<dbReference type="iPTMnet" id="Q4JDL3"/>
<dbReference type="PhosphoSitePlus" id="Q4JDL3"/>
<dbReference type="BioMuta" id="PTPN20"/>
<dbReference type="DMDM" id="121944218"/>
<dbReference type="MassIVE" id="Q4JDL3"/>
<dbReference type="PaxDb" id="9606-ENSP00000363459"/>
<dbReference type="PeptideAtlas" id="Q4JDL3"/>
<dbReference type="ProteomicsDB" id="62174">
    <molecule id="Q4JDL3-1"/>
</dbReference>
<dbReference type="ProteomicsDB" id="62175">
    <molecule id="Q4JDL3-10"/>
</dbReference>
<dbReference type="ProteomicsDB" id="62178">
    <molecule id="Q4JDL3-13"/>
</dbReference>
<dbReference type="ProteomicsDB" id="62186">
    <molecule id="Q4JDL3-7"/>
</dbReference>
<dbReference type="ProteomicsDB" id="62188">
    <molecule id="Q4JDL3-9"/>
</dbReference>
<dbReference type="Antibodypedia" id="66300">
    <property type="antibodies" value="85 antibodies from 17 providers"/>
</dbReference>
<dbReference type="DNASU" id="26095"/>
<dbReference type="Ensembl" id="ENST00000374218.6">
    <molecule id="Q4JDL3-4"/>
    <property type="protein sequence ID" value="ENSP00000363335.2"/>
    <property type="gene ID" value="ENSG00000204179.11"/>
</dbReference>
<dbReference type="Ensembl" id="ENST00000374339.5">
    <molecule id="Q4JDL3-1"/>
    <property type="protein sequence ID" value="ENSP00000363459.3"/>
    <property type="gene ID" value="ENSG00000204179.11"/>
</dbReference>
<dbReference type="Ensembl" id="ENST00000374346.7">
    <molecule id="Q4JDL3-7"/>
    <property type="protein sequence ID" value="ENSP00000363466.3"/>
    <property type="gene ID" value="ENSG00000204179.11"/>
</dbReference>
<dbReference type="Ensembl" id="ENST00000395721.6">
    <molecule id="Q4JDL3-4"/>
    <property type="protein sequence ID" value="ENSP00000379071.2"/>
    <property type="gene ID" value="ENSG00000204179.11"/>
</dbReference>
<dbReference type="Ensembl" id="ENST00000395725.7">
    <molecule id="Q4JDL3-14"/>
    <property type="protein sequence ID" value="ENSP00000379075.3"/>
    <property type="gene ID" value="ENSG00000204179.11"/>
</dbReference>
<dbReference type="Ensembl" id="ENST00000395727.6">
    <molecule id="Q4JDL3-6"/>
    <property type="protein sequence ID" value="ENSP00000379077.2"/>
    <property type="gene ID" value="ENSG00000204179.11"/>
</dbReference>
<dbReference type="Ensembl" id="ENST00000502254.5">
    <molecule id="Q4JDL3-13"/>
    <property type="protein sequence ID" value="ENSP00000421404.1"/>
    <property type="gene ID" value="ENSG00000204179.11"/>
</dbReference>
<dbReference type="Ensembl" id="ENST00000502705.5">
    <molecule id="Q4JDL3-10"/>
    <property type="protein sequence ID" value="ENSP00000420995.1"/>
    <property type="gene ID" value="ENSG00000204179.11"/>
</dbReference>
<dbReference type="Ensembl" id="ENST00000503851.5">
    <molecule id="Q4JDL3-15"/>
    <property type="protein sequence ID" value="ENSP00000427676.1"/>
    <property type="gene ID" value="ENSG00000204179.11"/>
</dbReference>
<dbReference type="Ensembl" id="ENST00000505814.5">
    <molecule id="Q4JDL3-4"/>
    <property type="protein sequence ID" value="ENSP00000426355.1"/>
    <property type="gene ID" value="ENSG00000204179.11"/>
</dbReference>
<dbReference type="Ensembl" id="ENST00000506080.5">
    <molecule id="Q4JDL3-4"/>
    <property type="protein sequence ID" value="ENSP00000421921.2"/>
    <property type="gene ID" value="ENSG00000204179.11"/>
</dbReference>
<dbReference type="Ensembl" id="ENST00000508602.5">
    <molecule id="Q4JDL3-14"/>
    <property type="protein sequence ID" value="ENSP00000424491.2"/>
    <property type="gene ID" value="ENSG00000204179.11"/>
</dbReference>
<dbReference type="Ensembl" id="ENST00000509599.5">
    <molecule id="Q4JDL3-7"/>
    <property type="protein sequence ID" value="ENSP00000425012.1"/>
    <property type="gene ID" value="ENSG00000204179.11"/>
</dbReference>
<dbReference type="Ensembl" id="ENST00000509774.5">
    <molecule id="Q4JDL3-8"/>
    <property type="protein sequence ID" value="ENSP00000425362.1"/>
    <property type="gene ID" value="ENSG00000204179.11"/>
</dbReference>
<dbReference type="Ensembl" id="ENST00000509900.5">
    <molecule id="Q4JDL3-14"/>
    <property type="protein sequence ID" value="ENSP00000423819.1"/>
    <property type="gene ID" value="ENSG00000204179.11"/>
</dbReference>
<dbReference type="Ensembl" id="ENST00000510335.5">
    <molecule id="Q4JDL3-9"/>
    <property type="protein sequence ID" value="ENSP00000421453.1"/>
    <property type="gene ID" value="ENSG00000204179.11"/>
</dbReference>
<dbReference type="Ensembl" id="ENST00000511769.5">
    <molecule id="Q4JDL3-2"/>
    <property type="protein sequence ID" value="ENSP00000424283.1"/>
    <property type="gene ID" value="ENSG00000204179.11"/>
</dbReference>
<dbReference type="Ensembl" id="ENST00000513156.5">
    <molecule id="Q4JDL3-11"/>
    <property type="protein sequence ID" value="ENSP00000425912.1"/>
    <property type="gene ID" value="ENSG00000204179.11"/>
</dbReference>
<dbReference type="Ensembl" id="ENST00000513266.5">
    <molecule id="Q4JDL3-5"/>
    <property type="protein sequence ID" value="ENSP00000422839.1"/>
    <property type="gene ID" value="ENSG00000204179.11"/>
</dbReference>
<dbReference type="GeneID" id="26095"/>
<dbReference type="KEGG" id="hsa:26095"/>
<dbReference type="MANE-Select" id="ENST00000374339.5">
    <property type="protein sequence ID" value="ENSP00000363459.3"/>
    <property type="RefSeq nucleotide sequence ID" value="NM_001042357.5"/>
    <property type="RefSeq protein sequence ID" value="NP_001035816.1"/>
</dbReference>
<dbReference type="UCSC" id="uc001jdb.2">
    <molecule id="Q4JDL3-1"/>
    <property type="organism name" value="human"/>
</dbReference>
<dbReference type="AGR" id="HGNC:23423"/>
<dbReference type="CTD" id="26095"/>
<dbReference type="DisGeNET" id="26095"/>
<dbReference type="GeneCards" id="PTPN20"/>
<dbReference type="HGNC" id="HGNC:23423">
    <property type="gene designation" value="PTPN20"/>
</dbReference>
<dbReference type="HPA" id="ENSG00000204179">
    <property type="expression patterns" value="Tissue enhanced (testis, tongue)"/>
</dbReference>
<dbReference type="MIM" id="610630">
    <property type="type" value="gene"/>
</dbReference>
<dbReference type="neXtProt" id="NX_Q4JDL3"/>
<dbReference type="OpenTargets" id="ENSG00000204179"/>
<dbReference type="VEuPathDB" id="HostDB:ENSG00000204179"/>
<dbReference type="eggNOG" id="KOG0789">
    <property type="taxonomic scope" value="Eukaryota"/>
</dbReference>
<dbReference type="GeneTree" id="ENSGT00940000160066"/>
<dbReference type="InParanoid" id="Q4JDL3"/>
<dbReference type="OMA" id="TQMRKQR"/>
<dbReference type="OrthoDB" id="165498at2759"/>
<dbReference type="PAN-GO" id="Q4JDL3">
    <property type="GO annotations" value="1 GO annotation based on evolutionary models"/>
</dbReference>
<dbReference type="PhylomeDB" id="Q4JDL3"/>
<dbReference type="TreeFam" id="TF315573"/>
<dbReference type="PathwayCommons" id="Q4JDL3"/>
<dbReference type="Reactome" id="R-HSA-9008059">
    <property type="pathway name" value="Interleukin-37 signaling"/>
</dbReference>
<dbReference type="SignaLink" id="Q4JDL3"/>
<dbReference type="BioGRID-ORCS" id="26095">
    <property type="hits" value="36 hits in 1043 CRISPR screens"/>
</dbReference>
<dbReference type="ChiTaRS" id="PTPN20">
    <property type="organism name" value="human"/>
</dbReference>
<dbReference type="GenomeRNAi" id="26095"/>
<dbReference type="Pharos" id="Q4JDL3">
    <property type="development level" value="Tdark"/>
</dbReference>
<dbReference type="PRO" id="PR:Q4JDL3"/>
<dbReference type="Proteomes" id="UP000005640">
    <property type="component" value="Chromosome 10"/>
</dbReference>
<dbReference type="RNAct" id="Q4JDL3">
    <property type="molecule type" value="protein"/>
</dbReference>
<dbReference type="Bgee" id="ENSG00000204179">
    <property type="expression patterns" value="Expressed in pons and 136 other cell types or tissues"/>
</dbReference>
<dbReference type="ExpressionAtlas" id="Q4JDL3">
    <property type="expression patterns" value="baseline and differential"/>
</dbReference>
<dbReference type="GO" id="GO:0034451">
    <property type="term" value="C:centriolar satellite"/>
    <property type="evidence" value="ECO:0000314"/>
    <property type="project" value="HPA"/>
</dbReference>
<dbReference type="GO" id="GO:0005737">
    <property type="term" value="C:cytoplasm"/>
    <property type="evidence" value="ECO:0000318"/>
    <property type="project" value="GO_Central"/>
</dbReference>
<dbReference type="GO" id="GO:0005874">
    <property type="term" value="C:microtubule"/>
    <property type="evidence" value="ECO:0007669"/>
    <property type="project" value="UniProtKB-KW"/>
</dbReference>
<dbReference type="GO" id="GO:0005654">
    <property type="term" value="C:nucleoplasm"/>
    <property type="evidence" value="ECO:0000304"/>
    <property type="project" value="Reactome"/>
</dbReference>
<dbReference type="GO" id="GO:0004721">
    <property type="term" value="F:phosphoprotein phosphatase activity"/>
    <property type="evidence" value="ECO:0007669"/>
    <property type="project" value="UniProtKB-KW"/>
</dbReference>
<dbReference type="GO" id="GO:0001946">
    <property type="term" value="P:lymphangiogenesis"/>
    <property type="evidence" value="ECO:0000318"/>
    <property type="project" value="GO_Central"/>
</dbReference>
<dbReference type="FunFam" id="3.90.190.10:FF:000087">
    <property type="entry name" value="Tyrosine-protein phosphatase non-receptor type 20"/>
    <property type="match status" value="1"/>
</dbReference>
<dbReference type="Gene3D" id="3.90.190.10">
    <property type="entry name" value="Protein tyrosine phosphatase superfamily"/>
    <property type="match status" value="1"/>
</dbReference>
<dbReference type="InterPro" id="IPR052074">
    <property type="entry name" value="NonRcpt_TyrProt_Phosphatase"/>
</dbReference>
<dbReference type="InterPro" id="IPR029021">
    <property type="entry name" value="Prot-tyrosine_phosphatase-like"/>
</dbReference>
<dbReference type="InterPro" id="IPR000242">
    <property type="entry name" value="PTP_cat"/>
</dbReference>
<dbReference type="InterPro" id="IPR016130">
    <property type="entry name" value="Tyr_Pase_AS"/>
</dbReference>
<dbReference type="InterPro" id="IPR003595">
    <property type="entry name" value="Tyr_Pase_cat"/>
</dbReference>
<dbReference type="InterPro" id="IPR000387">
    <property type="entry name" value="Tyr_Pase_dom"/>
</dbReference>
<dbReference type="PANTHER" id="PTHR46900:SF4">
    <property type="entry name" value="FERM AND PDZ DOMAIN CONTAINING 2"/>
    <property type="match status" value="1"/>
</dbReference>
<dbReference type="PANTHER" id="PTHR46900">
    <property type="entry name" value="TYROSINE-PROTEIN PHOSPHATASE NON-RECEPTOR TYPE 13"/>
    <property type="match status" value="1"/>
</dbReference>
<dbReference type="Pfam" id="PF00102">
    <property type="entry name" value="Y_phosphatase"/>
    <property type="match status" value="1"/>
</dbReference>
<dbReference type="PRINTS" id="PR00700">
    <property type="entry name" value="PRTYPHPHTASE"/>
</dbReference>
<dbReference type="SMART" id="SM00194">
    <property type="entry name" value="PTPc"/>
    <property type="match status" value="1"/>
</dbReference>
<dbReference type="SMART" id="SM00404">
    <property type="entry name" value="PTPc_motif"/>
    <property type="match status" value="1"/>
</dbReference>
<dbReference type="SUPFAM" id="SSF52799">
    <property type="entry name" value="(Phosphotyrosine protein) phosphatases II"/>
    <property type="match status" value="1"/>
</dbReference>
<dbReference type="PROSITE" id="PS00383">
    <property type="entry name" value="TYR_PHOSPHATASE_1"/>
    <property type="match status" value="1"/>
</dbReference>
<dbReference type="PROSITE" id="PS50056">
    <property type="entry name" value="TYR_PHOSPHATASE_2"/>
    <property type="match status" value="1"/>
</dbReference>
<dbReference type="PROSITE" id="PS50055">
    <property type="entry name" value="TYR_PHOSPHATASE_PTP"/>
    <property type="match status" value="1"/>
</dbReference>
<gene>
    <name evidence="10" type="primary">PTPN20</name>
    <name type="synonym">PTPN20A</name>
    <name evidence="10" type="synonym">PTPN20B</name>
</gene>
<protein>
    <recommendedName>
        <fullName>Tyrosine-protein phosphatase non-receptor type 20</fullName>
        <shortName>hPTPN20</shortName>
        <ecNumber>3.1.3.48</ecNumber>
    </recommendedName>
</protein>
<keyword id="KW-0025">Alternative splicing</keyword>
<keyword id="KW-0963">Cytoplasm</keyword>
<keyword id="KW-0206">Cytoskeleton</keyword>
<keyword id="KW-0378">Hydrolase</keyword>
<keyword id="KW-0493">Microtubule</keyword>
<keyword id="KW-0539">Nucleus</keyword>
<keyword id="KW-0597">Phosphoprotein</keyword>
<keyword id="KW-0904">Protein phosphatase</keyword>
<keyword id="KW-1267">Proteomics identification</keyword>
<keyword id="KW-1185">Reference proteome</keyword>
<sequence>MSSPRDFRAEPVNDYEGNDSEAEDLNFRETLPSSSQENTPRSKVFENKVNSEKVKLSLRNFPHNDYEDVFEEPSESGSDPSMWTARGPFRRDRWSSEDEEAAGPSQALSPLLSDTRKIVSEGELDQLAQIRPLIFNFHEQTAIKDCLKILEEKTAAYDIMQEFMALELKNLPGEFNSGNQPSNREKNRYRDILPYDSTRVPLGKSKDYINASYIRIVNCGEEYFYIATQGPLLSTIDDFWQMVLENNSNVIAMITREIEGGIIKCYHYWPISLKKPLELKHFRVFLENYQILQYFIIRMFQVVEKSTGTSHSVKQLQFTKWPDHGTPASADSFIKYIRYARKSHLTGPMVVHCSAGIGRTGVFLCVDVVFCAIVKNCSFNIMDIVAQMREQRSGMVQTKEQYHFCYDIVLEVLRKLLTLD</sequence>
<evidence type="ECO:0000250" key="1"/>
<evidence type="ECO:0000250" key="2">
    <source>
        <dbReference type="UniProtKB" id="A1L1L3"/>
    </source>
</evidence>
<evidence type="ECO:0000255" key="3">
    <source>
        <dbReference type="PROSITE-ProRule" id="PRU00160"/>
    </source>
</evidence>
<evidence type="ECO:0000255" key="4">
    <source>
        <dbReference type="PROSITE-ProRule" id="PRU10044"/>
    </source>
</evidence>
<evidence type="ECO:0000256" key="5">
    <source>
        <dbReference type="SAM" id="MobiDB-lite"/>
    </source>
</evidence>
<evidence type="ECO:0000269" key="6">
    <source>
    </source>
</evidence>
<evidence type="ECO:0000303" key="7">
    <source>
    </source>
</evidence>
<evidence type="ECO:0000303" key="8">
    <source>
    </source>
</evidence>
<evidence type="ECO:0000305" key="9"/>
<evidence type="ECO:0000312" key="10">
    <source>
        <dbReference type="HGNC" id="HGNC:23423"/>
    </source>
</evidence>
<feature type="chain" id="PRO_0000295755" description="Tyrosine-protein phosphatase non-receptor type 20">
    <location>
        <begin position="1"/>
        <end position="420"/>
    </location>
</feature>
<feature type="domain" description="Tyrosine-protein phosphatase" evidence="3">
    <location>
        <begin position="159"/>
        <end position="412"/>
    </location>
</feature>
<feature type="region of interest" description="Disordered" evidence="5">
    <location>
        <begin position="1"/>
        <end position="47"/>
    </location>
</feature>
<feature type="region of interest" description="Disordered" evidence="5">
    <location>
        <begin position="68"/>
        <end position="108"/>
    </location>
</feature>
<feature type="compositionally biased region" description="Basic and acidic residues" evidence="5">
    <location>
        <begin position="1"/>
        <end position="11"/>
    </location>
</feature>
<feature type="compositionally biased region" description="Polar residues" evidence="5">
    <location>
        <begin position="31"/>
        <end position="41"/>
    </location>
</feature>
<feature type="active site" description="Phosphocysteine intermediate" evidence="3 4">
    <location>
        <position position="353"/>
    </location>
</feature>
<feature type="binding site" evidence="1">
    <location>
        <position position="323"/>
    </location>
    <ligand>
        <name>substrate</name>
    </ligand>
</feature>
<feature type="binding site" evidence="1">
    <location>
        <begin position="353"/>
        <end position="359"/>
    </location>
    <ligand>
        <name>substrate</name>
    </ligand>
</feature>
<feature type="binding site" evidence="1">
    <location>
        <position position="397"/>
    </location>
    <ligand>
        <name>substrate</name>
    </ligand>
</feature>
<feature type="modified residue" description="Phosphoserine" evidence="2">
    <location>
        <position position="76"/>
    </location>
</feature>
<feature type="modified residue" description="Phosphoserine" evidence="2">
    <location>
        <position position="120"/>
    </location>
</feature>
<feature type="splice variant" id="VSP_027063" description="In isoform 6." evidence="8">
    <location>
        <begin position="1"/>
        <end position="192"/>
    </location>
</feature>
<feature type="splice variant" id="VSP_027064" description="In isoform 4, isoform 5, isoform 9 and isoform 14." evidence="8">
    <location>
        <begin position="1"/>
        <end position="81"/>
    </location>
</feature>
<feature type="splice variant" id="VSP_027065" description="In isoform 3 and isoform 12." evidence="8">
    <original>MSSPRDFRAEPVNDYEGNDSEAEDLNFRETLPSSSQENTPRSK</original>
    <variation>MGTTCLHLGTLEQSL</variation>
    <location>
        <begin position="1"/>
        <end position="43"/>
    </location>
</feature>
<feature type="splice variant" id="VSP_027066" description="In isoform 2, isoform 8, isoform 11 and isoform 15." evidence="8">
    <original>MSSPRDFRAEP</original>
    <variation>MI</variation>
    <location>
        <begin position="1"/>
        <end position="11"/>
    </location>
</feature>
<feature type="splice variant" id="VSP_027067" description="In isoform 13 and isoform 15." evidence="8">
    <original>DTRKIVSEGELDQLAQIRPLIFNFHEQTAIKD</original>
    <variation>VQHHGYSGPNERTTFWHGSNEGAVSLLLRYCA</variation>
    <location>
        <begin position="114"/>
        <end position="145"/>
    </location>
</feature>
<feature type="splice variant" id="VSP_027068" description="In isoform 13 and isoform 15." evidence="8">
    <location>
        <begin position="146"/>
        <end position="420"/>
    </location>
</feature>
<feature type="splice variant" id="VSP_027069" description="In isoform 10." evidence="8">
    <location>
        <begin position="165"/>
        <end position="378"/>
    </location>
</feature>
<feature type="splice variant" id="VSP_027070" description="In isoform 5 and isoform 11." evidence="8">
    <location>
        <begin position="165"/>
        <end position="306"/>
    </location>
</feature>
<feature type="splice variant" id="VSP_038003" description="In isoform 9." evidence="8">
    <original>ALELKNLPGEFNSGNQPSNRE</original>
    <variation>MIQHAFLLEKARTTSMLVILE</variation>
    <location>
        <begin position="165"/>
        <end position="185"/>
    </location>
</feature>
<feature type="splice variant" id="VSP_038004" description="In isoform 9." evidence="8">
    <location>
        <begin position="186"/>
        <end position="420"/>
    </location>
</feature>
<feature type="splice variant" id="VSP_027071" description="In isoform 6." evidence="8">
    <original>LPY</original>
    <variation>MID</variation>
    <location>
        <begin position="193"/>
        <end position="195"/>
    </location>
</feature>
<feature type="splice variant" id="VSP_027072" description="In isoform 7, isoform 8, isoform 12 and isoform 14." evidence="7 8">
    <original>YDSTRVPLGKSKDYINASYIRIVNCGEEYFYI</original>
    <variation>FQHHGYSGPNERTTFWHGSNEGAVSLLLRYCA</variation>
    <location>
        <begin position="195"/>
        <end position="226"/>
    </location>
</feature>
<feature type="splice variant" id="VSP_027073" description="In isoform 7, isoform 8, isoform 12 and isoform 14." evidence="7 8">
    <location>
        <begin position="227"/>
        <end position="420"/>
    </location>
</feature>
<comment type="function">
    <text>Tyrosine-protein phosphatase targeted to sites of actin polymerization in response of varied extracellular stimuli. Has tyrosine phosphatase activity towards various tyrosyl phosphorylated substrates.</text>
</comment>
<comment type="catalytic activity">
    <reaction evidence="4 6">
        <text>O-phospho-L-tyrosyl-[protein] + H2O = L-tyrosyl-[protein] + phosphate</text>
        <dbReference type="Rhea" id="RHEA:10684"/>
        <dbReference type="Rhea" id="RHEA-COMP:10136"/>
        <dbReference type="Rhea" id="RHEA-COMP:20101"/>
        <dbReference type="ChEBI" id="CHEBI:15377"/>
        <dbReference type="ChEBI" id="CHEBI:43474"/>
        <dbReference type="ChEBI" id="CHEBI:46858"/>
        <dbReference type="ChEBI" id="CHEBI:61978"/>
        <dbReference type="EC" id="3.1.3.48"/>
    </reaction>
</comment>
<comment type="subcellular location">
    <subcellularLocation>
        <location evidence="6">Nucleus</location>
    </subcellularLocation>
    <subcellularLocation>
        <location evidence="6">Cytoplasm</location>
    </subcellularLocation>
    <subcellularLocation>
        <location evidence="6">Cytoplasm</location>
        <location evidence="6">Cytoskeleton</location>
        <location evidence="6">Microtubule organizing center</location>
        <location evidence="6">Centrosome</location>
    </subcellularLocation>
    <text>Colocalizes with the microtubule-organizing center and intracellular membrane compartments.</text>
</comment>
<comment type="alternative products">
    <event type="alternative splicing"/>
    <isoform>
        <id>Q4JDL3-1</id>
        <name>1</name>
        <sequence type="displayed"/>
    </isoform>
    <isoform>
        <id>Q4JDL3-2</id>
        <name>2</name>
        <name>Variant 1</name>
        <sequence type="described" ref="VSP_027066"/>
    </isoform>
    <isoform>
        <id>Q4JDL3-3</id>
        <name>3</name>
        <name>Variant 10</name>
        <sequence type="described" ref="VSP_027065"/>
    </isoform>
    <isoform>
        <id>Q4JDL3-4</id>
        <name>4</name>
        <name>Variant 12</name>
        <sequence type="described" ref="VSP_027064"/>
    </isoform>
    <isoform>
        <id>Q4JDL3-5</id>
        <name>5</name>
        <name>Variant 13</name>
        <sequence type="described" ref="VSP_027064 VSP_027070"/>
    </isoform>
    <isoform>
        <id>Q4JDL3-6</id>
        <name>6</name>
        <name>Variant 3</name>
        <sequence type="described" ref="VSP_027063 VSP_027071"/>
    </isoform>
    <isoform>
        <id>Q4JDL3-7</id>
        <name>7</name>
        <name>Variant 7</name>
        <sequence type="described" ref="VSP_027072 VSP_027073"/>
    </isoform>
    <isoform>
        <id>Q4JDL3-8</id>
        <name>8</name>
        <name>Variant 4</name>
        <sequence type="described" ref="VSP_027066 VSP_027072 VSP_027073"/>
    </isoform>
    <isoform>
        <id>Q4JDL3-9</id>
        <name>9</name>
        <name>Variant 18</name>
        <sequence type="described" ref="VSP_027064 VSP_038003 VSP_038004"/>
    </isoform>
    <isoform>
        <id>Q4JDL3-10</id>
        <name>10</name>
        <name>Variant 8</name>
        <sequence type="described" ref="VSP_027069"/>
    </isoform>
    <isoform>
        <id>Q4JDL3-11</id>
        <name>11</name>
        <name>Variant 2</name>
        <sequence type="described" ref="VSP_027066 VSP_027070"/>
    </isoform>
    <isoform>
        <id>Q4JDL3-12</id>
        <name>12</name>
        <name>Variant 11</name>
        <sequence type="described" ref="VSP_027065 VSP_027072 VSP_027073"/>
    </isoform>
    <isoform>
        <id>Q4JDL3-13</id>
        <name>13</name>
        <name>Variant 9</name>
        <sequence type="described" ref="VSP_027067 VSP_027068"/>
    </isoform>
    <isoform>
        <id>Q4JDL3-14</id>
        <name>14</name>
        <name>Variant 14</name>
        <sequence type="described" ref="VSP_027064 VSP_027072 VSP_027073"/>
    </isoform>
    <isoform>
        <id>Q4JDL3-15</id>
        <name>15</name>
        <name>Variant 5</name>
        <sequence type="described" ref="VSP_027066 VSP_027067 VSP_027068"/>
    </isoform>
</comment>
<comment type="tissue specificity">
    <text evidence="6">Present in many cell lines (at protein level). Widely expressed.</text>
</comment>
<comment type="miscellaneous">
    <molecule>Isoform 9</molecule>
    <text evidence="9">May be produced at very low levels due to a premature stop codon in the mRNA, leading to nonsense-mediated mRNA decay.</text>
</comment>
<comment type="similarity">
    <text evidence="9">Belongs to the protein-tyrosine phosphatase family. Non-receptor class subfamily.</text>
</comment>
<comment type="sequence caution" evidence="9">
    <conflict type="erroneous translation">
        <sequence resource="EMBL-CDS" id="AAW28797"/>
    </conflict>
    <text>Wrong choice of frame.</text>
</comment>
<proteinExistence type="evidence at protein level"/>
<accession>Q4JDL3</accession>
<accession>A6NNH8</accession>
<accession>B7ZKV3</accession>
<accession>Q4JDG6</accession>
<accession>Q4JDK1</accession>
<accession>Q4JDK5</accession>
<accession>Q4JDK6</accession>
<accession>Q4JDK8</accession>
<accession>Q4JDK9</accession>
<accession>Q4JDL0</accession>
<accession>Q4JDL1</accession>
<accession>Q4JDL4</accession>
<accession>Q4JDL5</accession>
<accession>Q4JDL6</accession>
<accession>Q4JDL7</accession>
<accession>Q4JDL8</accession>
<accession>Q5RJ33</accession>
<accession>Q5T1G3</accession>
<name>PTN20_HUMAN</name>
<reference key="1">
    <citation type="journal article" date="2005" name="Biochem. J.">
        <title>Protein tyrosine phosphatase hPTPN20a is targeted to sites of actin polymerization.</title>
        <authorList>
            <person name="Fodero-Tavoletti M.T."/>
            <person name="Hardy M.P."/>
            <person name="Cornell B."/>
            <person name="Katsis F."/>
            <person name="Sadek C.M."/>
            <person name="Mitchell C.A."/>
            <person name="Kemp B.E."/>
            <person name="Tiganis T."/>
        </authorList>
    </citation>
    <scope>NUCLEOTIDE SEQUENCE [MRNA] (ISOFORMS 1; 2; 3; 4; 5; 6; 7; 8; 9; 10; 11; 12; 13; 14 AND 15)</scope>
    <scope>ENZYME ACTIVITY</scope>
    <scope>SUBCELLULAR LOCATION</scope>
    <scope>TISSUE SPECIFICITY</scope>
</reference>
<reference key="2">
    <citation type="journal article" date="2004" name="Nature">
        <title>The DNA sequence and comparative analysis of human chromosome 10.</title>
        <authorList>
            <person name="Deloukas P."/>
            <person name="Earthrowl M.E."/>
            <person name="Grafham D.V."/>
            <person name="Rubenfield M."/>
            <person name="French L."/>
            <person name="Steward C.A."/>
            <person name="Sims S.K."/>
            <person name="Jones M.C."/>
            <person name="Searle S."/>
            <person name="Scott C."/>
            <person name="Howe K."/>
            <person name="Hunt S.E."/>
            <person name="Andrews T.D."/>
            <person name="Gilbert J.G.R."/>
            <person name="Swarbreck D."/>
            <person name="Ashurst J.L."/>
            <person name="Taylor A."/>
            <person name="Battles J."/>
            <person name="Bird C.P."/>
            <person name="Ainscough R."/>
            <person name="Almeida J.P."/>
            <person name="Ashwell R.I.S."/>
            <person name="Ambrose K.D."/>
            <person name="Babbage A.K."/>
            <person name="Bagguley C.L."/>
            <person name="Bailey J."/>
            <person name="Banerjee R."/>
            <person name="Bates K."/>
            <person name="Beasley H."/>
            <person name="Bray-Allen S."/>
            <person name="Brown A.J."/>
            <person name="Brown J.Y."/>
            <person name="Burford D.C."/>
            <person name="Burrill W."/>
            <person name="Burton J."/>
            <person name="Cahill P."/>
            <person name="Camire D."/>
            <person name="Carter N.P."/>
            <person name="Chapman J.C."/>
            <person name="Clark S.Y."/>
            <person name="Clarke G."/>
            <person name="Clee C.M."/>
            <person name="Clegg S."/>
            <person name="Corby N."/>
            <person name="Coulson A."/>
            <person name="Dhami P."/>
            <person name="Dutta I."/>
            <person name="Dunn M."/>
            <person name="Faulkner L."/>
            <person name="Frankish A."/>
            <person name="Frankland J.A."/>
            <person name="Garner P."/>
            <person name="Garnett J."/>
            <person name="Gribble S."/>
            <person name="Griffiths C."/>
            <person name="Grocock R."/>
            <person name="Gustafson E."/>
            <person name="Hammond S."/>
            <person name="Harley J.L."/>
            <person name="Hart E."/>
            <person name="Heath P.D."/>
            <person name="Ho T.P."/>
            <person name="Hopkins B."/>
            <person name="Horne J."/>
            <person name="Howden P.J."/>
            <person name="Huckle E."/>
            <person name="Hynds C."/>
            <person name="Johnson C."/>
            <person name="Johnson D."/>
            <person name="Kana A."/>
            <person name="Kay M."/>
            <person name="Kimberley A.M."/>
            <person name="Kershaw J.K."/>
            <person name="Kokkinaki M."/>
            <person name="Laird G.K."/>
            <person name="Lawlor S."/>
            <person name="Lee H.M."/>
            <person name="Leongamornlert D.A."/>
            <person name="Laird G."/>
            <person name="Lloyd C."/>
            <person name="Lloyd D.M."/>
            <person name="Loveland J."/>
            <person name="Lovell J."/>
            <person name="McLaren S."/>
            <person name="McLay K.E."/>
            <person name="McMurray A."/>
            <person name="Mashreghi-Mohammadi M."/>
            <person name="Matthews L."/>
            <person name="Milne S."/>
            <person name="Nickerson T."/>
            <person name="Nguyen M."/>
            <person name="Overton-Larty E."/>
            <person name="Palmer S.A."/>
            <person name="Pearce A.V."/>
            <person name="Peck A.I."/>
            <person name="Pelan S."/>
            <person name="Phillimore B."/>
            <person name="Porter K."/>
            <person name="Rice C.M."/>
            <person name="Rogosin A."/>
            <person name="Ross M.T."/>
            <person name="Sarafidou T."/>
            <person name="Sehra H.K."/>
            <person name="Shownkeen R."/>
            <person name="Skuce C.D."/>
            <person name="Smith M."/>
            <person name="Standring L."/>
            <person name="Sycamore N."/>
            <person name="Tester J."/>
            <person name="Thorpe A."/>
            <person name="Torcasso W."/>
            <person name="Tracey A."/>
            <person name="Tromans A."/>
            <person name="Tsolas J."/>
            <person name="Wall M."/>
            <person name="Walsh J."/>
            <person name="Wang H."/>
            <person name="Weinstock K."/>
            <person name="West A.P."/>
            <person name="Willey D.L."/>
            <person name="Whitehead S.L."/>
            <person name="Wilming L."/>
            <person name="Wray P.W."/>
            <person name="Young L."/>
            <person name="Chen Y."/>
            <person name="Lovering R.C."/>
            <person name="Moschonas N.K."/>
            <person name="Siebert R."/>
            <person name="Fechtel K."/>
            <person name="Bentley D."/>
            <person name="Durbin R.M."/>
            <person name="Hubbard T."/>
            <person name="Doucette-Stamm L."/>
            <person name="Beck S."/>
            <person name="Smith D.R."/>
            <person name="Rogers J."/>
        </authorList>
    </citation>
    <scope>NUCLEOTIDE SEQUENCE [LARGE SCALE GENOMIC DNA]</scope>
</reference>
<reference key="3">
    <citation type="journal article" date="2004" name="Genome Res.">
        <title>The status, quality, and expansion of the NIH full-length cDNA project: the Mammalian Gene Collection (MGC).</title>
        <authorList>
            <consortium name="The MGC Project Team"/>
        </authorList>
    </citation>
    <scope>NUCLEOTIDE SEQUENCE [LARGE SCALE MRNA] (ISOFORM 7)</scope>
    <source>
        <tissue>Heart</tissue>
        <tissue>Lung</tissue>
    </source>
</reference>
<organism>
    <name type="scientific">Homo sapiens</name>
    <name type="common">Human</name>
    <dbReference type="NCBI Taxonomy" id="9606"/>
    <lineage>
        <taxon>Eukaryota</taxon>
        <taxon>Metazoa</taxon>
        <taxon>Chordata</taxon>
        <taxon>Craniata</taxon>
        <taxon>Vertebrata</taxon>
        <taxon>Euteleostomi</taxon>
        <taxon>Mammalia</taxon>
        <taxon>Eutheria</taxon>
        <taxon>Euarchontoglires</taxon>
        <taxon>Primates</taxon>
        <taxon>Haplorrhini</taxon>
        <taxon>Catarrhini</taxon>
        <taxon>Hominidae</taxon>
        <taxon>Homo</taxon>
    </lineage>
</organism>